<sequence length="426" mass="47285">MIRSARLISNIKFGQKNIRQFSTNTNWWANVQKGPEDPILGVSIAYNKDTSPSKINLGVGAYRDENGKPYVLDCVKKADKKIYEANVDHEYAPIVGVAAFNQLAAQLALGEECKHIKEKRIATVQSISGTGALRIAADFFARFLKGKTAYVPNPTWGNHNVIFNDAGIPVKSYGYYNPATCGLNFEAMTKDIAAAPEGSIILLHACAHNPTGVDPTAEQWKKISEICKERGHFVLFDFAYQGFASGSPEKDAAAVRMFVEDGHNIALCQSFAKNFGLYGERIGAFSILTETSDQALNVESQLKILIRPMYSNPPVYGARLVQAILKDKELTNEWRSEVKGMADRIINMREQLVKYLKKHGSTRDWSHITTQIGMFCFTGLTPEQVDRLANEYHIYLTRNGRISIAGINSTNVEYLAKAMAAVTKDN</sequence>
<reference key="1">
    <citation type="journal article" date="2005" name="Nature">
        <title>The genome of the social amoeba Dictyostelium discoideum.</title>
        <authorList>
            <person name="Eichinger L."/>
            <person name="Pachebat J.A."/>
            <person name="Gloeckner G."/>
            <person name="Rajandream M.A."/>
            <person name="Sucgang R."/>
            <person name="Berriman M."/>
            <person name="Song J."/>
            <person name="Olsen R."/>
            <person name="Szafranski K."/>
            <person name="Xu Q."/>
            <person name="Tunggal B."/>
            <person name="Kummerfeld S."/>
            <person name="Madera M."/>
            <person name="Konfortov B.A."/>
            <person name="Rivero F."/>
            <person name="Bankier A.T."/>
            <person name="Lehmann R."/>
            <person name="Hamlin N."/>
            <person name="Davies R."/>
            <person name="Gaudet P."/>
            <person name="Fey P."/>
            <person name="Pilcher K."/>
            <person name="Chen G."/>
            <person name="Saunders D."/>
            <person name="Sodergren E.J."/>
            <person name="Davis P."/>
            <person name="Kerhornou A."/>
            <person name="Nie X."/>
            <person name="Hall N."/>
            <person name="Anjard C."/>
            <person name="Hemphill L."/>
            <person name="Bason N."/>
            <person name="Farbrother P."/>
            <person name="Desany B."/>
            <person name="Just E."/>
            <person name="Morio T."/>
            <person name="Rost R."/>
            <person name="Churcher C.M."/>
            <person name="Cooper J."/>
            <person name="Haydock S."/>
            <person name="van Driessche N."/>
            <person name="Cronin A."/>
            <person name="Goodhead I."/>
            <person name="Muzny D.M."/>
            <person name="Mourier T."/>
            <person name="Pain A."/>
            <person name="Lu M."/>
            <person name="Harper D."/>
            <person name="Lindsay R."/>
            <person name="Hauser H."/>
            <person name="James K.D."/>
            <person name="Quiles M."/>
            <person name="Madan Babu M."/>
            <person name="Saito T."/>
            <person name="Buchrieser C."/>
            <person name="Wardroper A."/>
            <person name="Felder M."/>
            <person name="Thangavelu M."/>
            <person name="Johnson D."/>
            <person name="Knights A."/>
            <person name="Loulseged H."/>
            <person name="Mungall K.L."/>
            <person name="Oliver K."/>
            <person name="Price C."/>
            <person name="Quail M.A."/>
            <person name="Urushihara H."/>
            <person name="Hernandez J."/>
            <person name="Rabbinowitsch E."/>
            <person name="Steffen D."/>
            <person name="Sanders M."/>
            <person name="Ma J."/>
            <person name="Kohara Y."/>
            <person name="Sharp S."/>
            <person name="Simmonds M.N."/>
            <person name="Spiegler S."/>
            <person name="Tivey A."/>
            <person name="Sugano S."/>
            <person name="White B."/>
            <person name="Walker D."/>
            <person name="Woodward J.R."/>
            <person name="Winckler T."/>
            <person name="Tanaka Y."/>
            <person name="Shaulsky G."/>
            <person name="Schleicher M."/>
            <person name="Weinstock G.M."/>
            <person name="Rosenthal A."/>
            <person name="Cox E.C."/>
            <person name="Chisholm R.L."/>
            <person name="Gibbs R.A."/>
            <person name="Loomis W.F."/>
            <person name="Platzer M."/>
            <person name="Kay R.R."/>
            <person name="Williams J.G."/>
            <person name="Dear P.H."/>
            <person name="Noegel A.A."/>
            <person name="Barrell B.G."/>
            <person name="Kuspa A."/>
        </authorList>
    </citation>
    <scope>NUCLEOTIDE SEQUENCE [LARGE SCALE GENOMIC DNA]</scope>
    <source>
        <strain>AX4</strain>
    </source>
</reference>
<accession>Q55F21</accession>
<name>AATM_DICDI</name>
<proteinExistence type="inferred from homology"/>
<comment type="function">
    <text evidence="1">Plays a key role in amino acid metabolism. Important for metabolite exchange between mitochondria and cytosol (By similarity).</text>
</comment>
<comment type="catalytic activity">
    <reaction evidence="2">
        <text>L-aspartate + 2-oxoglutarate = oxaloacetate + L-glutamate</text>
        <dbReference type="Rhea" id="RHEA:21824"/>
        <dbReference type="ChEBI" id="CHEBI:16452"/>
        <dbReference type="ChEBI" id="CHEBI:16810"/>
        <dbReference type="ChEBI" id="CHEBI:29985"/>
        <dbReference type="ChEBI" id="CHEBI:29991"/>
        <dbReference type="EC" id="2.6.1.1"/>
    </reaction>
</comment>
<comment type="catalytic activity">
    <reaction evidence="2">
        <text>L-kynurenine + 2-oxoglutarate = kynurenate + L-glutamate + H2O</text>
        <dbReference type="Rhea" id="RHEA:65560"/>
        <dbReference type="ChEBI" id="CHEBI:15377"/>
        <dbReference type="ChEBI" id="CHEBI:16810"/>
        <dbReference type="ChEBI" id="CHEBI:29985"/>
        <dbReference type="ChEBI" id="CHEBI:57959"/>
        <dbReference type="ChEBI" id="CHEBI:58454"/>
        <dbReference type="EC" id="2.6.1.7"/>
    </reaction>
</comment>
<comment type="cofactor">
    <cofactor evidence="1">
        <name>pyridoxal 5'-phosphate</name>
        <dbReference type="ChEBI" id="CHEBI:597326"/>
    </cofactor>
</comment>
<comment type="subunit">
    <text evidence="1">Homodimer.</text>
</comment>
<comment type="subcellular location">
    <subcellularLocation>
        <location>Mitochondrion matrix</location>
    </subcellularLocation>
    <subcellularLocation>
        <location evidence="1">Cell membrane</location>
    </subcellularLocation>
</comment>
<comment type="miscellaneous">
    <text>In eukaryotes there are cytoplasmic, mitochondrial and chloroplastic isozymes.</text>
</comment>
<comment type="similarity">
    <text evidence="4">Belongs to the class-I pyridoxal-phosphate-dependent aminotransferase family.</text>
</comment>
<keyword id="KW-0032">Aminotransferase</keyword>
<keyword id="KW-1003">Cell membrane</keyword>
<keyword id="KW-0472">Membrane</keyword>
<keyword id="KW-0496">Mitochondrion</keyword>
<keyword id="KW-0663">Pyridoxal phosphate</keyword>
<keyword id="KW-1185">Reference proteome</keyword>
<keyword id="KW-0808">Transferase</keyword>
<keyword id="KW-0809">Transit peptide</keyword>
<organism>
    <name type="scientific">Dictyostelium discoideum</name>
    <name type="common">Social amoeba</name>
    <dbReference type="NCBI Taxonomy" id="44689"/>
    <lineage>
        <taxon>Eukaryota</taxon>
        <taxon>Amoebozoa</taxon>
        <taxon>Evosea</taxon>
        <taxon>Eumycetozoa</taxon>
        <taxon>Dictyostelia</taxon>
        <taxon>Dictyosteliales</taxon>
        <taxon>Dictyosteliaceae</taxon>
        <taxon>Dictyostelium</taxon>
    </lineage>
</organism>
<gene>
    <name type="primary">aatA</name>
    <name type="ORF">DDB_G0268664</name>
</gene>
<feature type="transit peptide" description="Mitochondrion" evidence="3">
    <location>
        <begin position="1"/>
        <end position="29"/>
    </location>
</feature>
<feature type="chain" id="PRO_0000327597" description="Aspartate aminotransferase, mitochondrial">
    <location>
        <begin position="30"/>
        <end position="426"/>
    </location>
</feature>
<feature type="binding site" evidence="1">
    <location>
        <position position="60"/>
    </location>
    <ligand>
        <name>substrate</name>
    </ligand>
</feature>
<feature type="binding site" evidence="1">
    <location>
        <position position="156"/>
    </location>
    <ligand>
        <name>substrate</name>
    </ligand>
</feature>
<feature type="binding site" evidence="1">
    <location>
        <position position="209"/>
    </location>
    <ligand>
        <name>substrate</name>
    </ligand>
</feature>
<feature type="binding site" evidence="1">
    <location>
        <position position="401"/>
    </location>
    <ligand>
        <name>substrate</name>
    </ligand>
</feature>
<feature type="modified residue" description="N6-(pyridoxal phosphate)lysine" evidence="1">
    <location>
        <position position="273"/>
    </location>
</feature>
<dbReference type="EC" id="2.6.1.1" evidence="2"/>
<dbReference type="EC" id="2.6.1.7" evidence="2"/>
<dbReference type="EMBL" id="AAFI02000004">
    <property type="protein sequence ID" value="EAL72921.1"/>
    <property type="molecule type" value="Genomic_DNA"/>
</dbReference>
<dbReference type="RefSeq" id="XP_646849.1">
    <property type="nucleotide sequence ID" value="XM_641757.1"/>
</dbReference>
<dbReference type="SMR" id="Q55F21"/>
<dbReference type="FunCoup" id="Q55F21">
    <property type="interactions" value="912"/>
</dbReference>
<dbReference type="STRING" id="44689.Q55F21"/>
<dbReference type="GlyGen" id="Q55F21">
    <property type="glycosylation" value="1 site"/>
</dbReference>
<dbReference type="PaxDb" id="44689-DDB0230092"/>
<dbReference type="EnsemblProtists" id="EAL72921">
    <property type="protein sequence ID" value="EAL72921"/>
    <property type="gene ID" value="DDB_G0268664"/>
</dbReference>
<dbReference type="GeneID" id="8616532"/>
<dbReference type="KEGG" id="ddi:DDB_G0268664"/>
<dbReference type="dictyBase" id="DDB_G0268664">
    <property type="gene designation" value="aatA"/>
</dbReference>
<dbReference type="VEuPathDB" id="AmoebaDB:DDB_G0268664"/>
<dbReference type="eggNOG" id="KOG1411">
    <property type="taxonomic scope" value="Eukaryota"/>
</dbReference>
<dbReference type="HOGENOM" id="CLU_032440_1_2_1"/>
<dbReference type="InParanoid" id="Q55F21"/>
<dbReference type="OMA" id="GTWTHIT"/>
<dbReference type="PhylomeDB" id="Q55F21"/>
<dbReference type="Reactome" id="R-DDI-389661">
    <property type="pathway name" value="Glyoxylate metabolism and glycine degradation"/>
</dbReference>
<dbReference type="Reactome" id="R-DDI-8963693">
    <property type="pathway name" value="Aspartate and asparagine metabolism"/>
</dbReference>
<dbReference type="Reactome" id="R-DDI-8964539">
    <property type="pathway name" value="Glutamate and glutamine metabolism"/>
</dbReference>
<dbReference type="Reactome" id="R-DDI-9856872">
    <property type="pathway name" value="Malate-aspartate shuttle"/>
</dbReference>
<dbReference type="PRO" id="PR:Q55F21"/>
<dbReference type="Proteomes" id="UP000002195">
    <property type="component" value="Chromosome 1"/>
</dbReference>
<dbReference type="GO" id="GO:0005759">
    <property type="term" value="C:mitochondrial matrix"/>
    <property type="evidence" value="ECO:0007669"/>
    <property type="project" value="UniProtKB-SubCell"/>
</dbReference>
<dbReference type="GO" id="GO:0005739">
    <property type="term" value="C:mitochondrion"/>
    <property type="evidence" value="ECO:0000250"/>
    <property type="project" value="UniProtKB"/>
</dbReference>
<dbReference type="GO" id="GO:0005886">
    <property type="term" value="C:plasma membrane"/>
    <property type="evidence" value="ECO:0007669"/>
    <property type="project" value="UniProtKB-SubCell"/>
</dbReference>
<dbReference type="GO" id="GO:0016212">
    <property type="term" value="F:kynurenine-oxoglutarate transaminase activity"/>
    <property type="evidence" value="ECO:0007669"/>
    <property type="project" value="UniProtKB-EC"/>
</dbReference>
<dbReference type="GO" id="GO:0004069">
    <property type="term" value="F:L-aspartate:2-oxoglutarate aminotransferase activity"/>
    <property type="evidence" value="ECO:0000250"/>
    <property type="project" value="UniProtKB"/>
</dbReference>
<dbReference type="GO" id="GO:0030170">
    <property type="term" value="F:pyridoxal phosphate binding"/>
    <property type="evidence" value="ECO:0007669"/>
    <property type="project" value="InterPro"/>
</dbReference>
<dbReference type="GO" id="GO:0006103">
    <property type="term" value="P:2-oxoglutarate metabolic process"/>
    <property type="evidence" value="ECO:0000250"/>
    <property type="project" value="UniProtKB"/>
</dbReference>
<dbReference type="GO" id="GO:0006532">
    <property type="term" value="P:aspartate biosynthetic process"/>
    <property type="evidence" value="ECO:0000250"/>
    <property type="project" value="dictyBase"/>
</dbReference>
<dbReference type="GO" id="GO:0006533">
    <property type="term" value="P:aspartate catabolic process"/>
    <property type="evidence" value="ECO:0000250"/>
    <property type="project" value="dictyBase"/>
</dbReference>
<dbReference type="GO" id="GO:0006531">
    <property type="term" value="P:aspartate metabolic process"/>
    <property type="evidence" value="ECO:0000250"/>
    <property type="project" value="UniProtKB"/>
</dbReference>
<dbReference type="GO" id="GO:0006536">
    <property type="term" value="P:glutamate metabolic process"/>
    <property type="evidence" value="ECO:0000250"/>
    <property type="project" value="UniProtKB"/>
</dbReference>
<dbReference type="CDD" id="cd00609">
    <property type="entry name" value="AAT_like"/>
    <property type="match status" value="1"/>
</dbReference>
<dbReference type="FunFam" id="3.40.640.10:FF:000015">
    <property type="entry name" value="Aspartate aminotransferase"/>
    <property type="match status" value="1"/>
</dbReference>
<dbReference type="FunFam" id="3.90.1150.10:FF:000001">
    <property type="entry name" value="Aspartate aminotransferase"/>
    <property type="match status" value="1"/>
</dbReference>
<dbReference type="Gene3D" id="3.90.1150.10">
    <property type="entry name" value="Aspartate Aminotransferase, domain 1"/>
    <property type="match status" value="1"/>
</dbReference>
<dbReference type="Gene3D" id="3.40.640.10">
    <property type="entry name" value="Type I PLP-dependent aspartate aminotransferase-like (Major domain)"/>
    <property type="match status" value="1"/>
</dbReference>
<dbReference type="InterPro" id="IPR004839">
    <property type="entry name" value="Aminotransferase_I/II_large"/>
</dbReference>
<dbReference type="InterPro" id="IPR000796">
    <property type="entry name" value="Asp_trans"/>
</dbReference>
<dbReference type="InterPro" id="IPR004838">
    <property type="entry name" value="NHTrfase_class1_PyrdxlP-BS"/>
</dbReference>
<dbReference type="InterPro" id="IPR015424">
    <property type="entry name" value="PyrdxlP-dep_Trfase"/>
</dbReference>
<dbReference type="InterPro" id="IPR015421">
    <property type="entry name" value="PyrdxlP-dep_Trfase_major"/>
</dbReference>
<dbReference type="InterPro" id="IPR015422">
    <property type="entry name" value="PyrdxlP-dep_Trfase_small"/>
</dbReference>
<dbReference type="NCBIfam" id="NF006719">
    <property type="entry name" value="PRK09257.1"/>
    <property type="match status" value="1"/>
</dbReference>
<dbReference type="PANTHER" id="PTHR11879">
    <property type="entry name" value="ASPARTATE AMINOTRANSFERASE"/>
    <property type="match status" value="1"/>
</dbReference>
<dbReference type="PANTHER" id="PTHR11879:SF22">
    <property type="entry name" value="ASPARTATE AMINOTRANSFERASE, MITOCHONDRIAL"/>
    <property type="match status" value="1"/>
</dbReference>
<dbReference type="Pfam" id="PF00155">
    <property type="entry name" value="Aminotran_1_2"/>
    <property type="match status" value="1"/>
</dbReference>
<dbReference type="PRINTS" id="PR00799">
    <property type="entry name" value="TRANSAMINASE"/>
</dbReference>
<dbReference type="SUPFAM" id="SSF53383">
    <property type="entry name" value="PLP-dependent transferases"/>
    <property type="match status" value="1"/>
</dbReference>
<dbReference type="PROSITE" id="PS00105">
    <property type="entry name" value="AA_TRANSFER_CLASS_1"/>
    <property type="match status" value="1"/>
</dbReference>
<evidence type="ECO:0000250" key="1"/>
<evidence type="ECO:0000250" key="2">
    <source>
        <dbReference type="UniProtKB" id="P00507"/>
    </source>
</evidence>
<evidence type="ECO:0000255" key="3"/>
<evidence type="ECO:0000305" key="4"/>
<protein>
    <recommendedName>
        <fullName>Aspartate aminotransferase, mitochondrial</fullName>
        <ecNumber evidence="2">2.6.1.1</ecNumber>
        <ecNumber evidence="2">2.6.1.7</ecNumber>
    </recommendedName>
    <alternativeName>
        <fullName>Kynurenine aminotransferase 4</fullName>
    </alternativeName>
    <alternativeName>
        <fullName>Kynurenine aminotransferase IV</fullName>
    </alternativeName>
    <alternativeName>
        <fullName>Kynurenine--oxoglutarate transaminase 4</fullName>
    </alternativeName>
    <alternativeName>
        <fullName>Kynurenine--oxoglutarate transaminase IV</fullName>
    </alternativeName>
    <alternativeName>
        <fullName>Transaminase A</fullName>
    </alternativeName>
</protein>